<reference key="1">
    <citation type="submission" date="2008-08" db="EMBL/GenBank/DDBJ databases">
        <title>Complete sequence of Anaeromyxobacter sp. K.</title>
        <authorList>
            <consortium name="US DOE Joint Genome Institute"/>
            <person name="Lucas S."/>
            <person name="Copeland A."/>
            <person name="Lapidus A."/>
            <person name="Glavina del Rio T."/>
            <person name="Dalin E."/>
            <person name="Tice H."/>
            <person name="Bruce D."/>
            <person name="Goodwin L."/>
            <person name="Pitluck S."/>
            <person name="Saunders E."/>
            <person name="Brettin T."/>
            <person name="Detter J.C."/>
            <person name="Han C."/>
            <person name="Larimer F."/>
            <person name="Land M."/>
            <person name="Hauser L."/>
            <person name="Kyrpides N."/>
            <person name="Ovchinnikiva G."/>
            <person name="Beliaev A."/>
        </authorList>
    </citation>
    <scope>NUCLEOTIDE SEQUENCE [LARGE SCALE GENOMIC DNA]</scope>
    <source>
        <strain>K</strain>
    </source>
</reference>
<feature type="chain" id="PRO_1000135786" description="3-isopropylmalate dehydratase small subunit">
    <location>
        <begin position="1"/>
        <end position="191"/>
    </location>
</feature>
<proteinExistence type="inferred from homology"/>
<comment type="function">
    <text evidence="1">Catalyzes the isomerization between 2-isopropylmalate and 3-isopropylmalate, via the formation of 2-isopropylmaleate.</text>
</comment>
<comment type="catalytic activity">
    <reaction evidence="1">
        <text>(2R,3S)-3-isopropylmalate = (2S)-2-isopropylmalate</text>
        <dbReference type="Rhea" id="RHEA:32287"/>
        <dbReference type="ChEBI" id="CHEBI:1178"/>
        <dbReference type="ChEBI" id="CHEBI:35121"/>
        <dbReference type="EC" id="4.2.1.33"/>
    </reaction>
</comment>
<comment type="pathway">
    <text evidence="1">Amino-acid biosynthesis; L-leucine biosynthesis; L-leucine from 3-methyl-2-oxobutanoate: step 2/4.</text>
</comment>
<comment type="subunit">
    <text evidence="1">Heterodimer of LeuC and LeuD.</text>
</comment>
<comment type="similarity">
    <text evidence="1">Belongs to the LeuD family. LeuD type 1 subfamily.</text>
</comment>
<evidence type="ECO:0000255" key="1">
    <source>
        <dbReference type="HAMAP-Rule" id="MF_01031"/>
    </source>
</evidence>
<organism>
    <name type="scientific">Anaeromyxobacter sp. (strain K)</name>
    <dbReference type="NCBI Taxonomy" id="447217"/>
    <lineage>
        <taxon>Bacteria</taxon>
        <taxon>Pseudomonadati</taxon>
        <taxon>Myxococcota</taxon>
        <taxon>Myxococcia</taxon>
        <taxon>Myxococcales</taxon>
        <taxon>Cystobacterineae</taxon>
        <taxon>Anaeromyxobacteraceae</taxon>
        <taxon>Anaeromyxobacter</taxon>
    </lineage>
</organism>
<accession>B4UAN1</accession>
<sequence length="191" mass="20515">MEPIRVIESRTVVLPRENVDTDQIIPARFLKVTDKKGLGKALFSDWRYAADGAPRPDFVMNRPEAQGCSILVAGDNFGCGSSREHAPWALVDAGVRAVISTRIADIFRNNALKNGLVPVVLDAASHAKLLAAPGASVRVDVEAQTVTLPDGSTARFPLDGFARYCLLNGVDELGFLLAQEADIAAFEGGRR</sequence>
<keyword id="KW-0028">Amino-acid biosynthesis</keyword>
<keyword id="KW-0100">Branched-chain amino acid biosynthesis</keyword>
<keyword id="KW-0432">Leucine biosynthesis</keyword>
<keyword id="KW-0456">Lyase</keyword>
<protein>
    <recommendedName>
        <fullName evidence="1">3-isopropylmalate dehydratase small subunit</fullName>
        <ecNumber evidence="1">4.2.1.33</ecNumber>
    </recommendedName>
    <alternativeName>
        <fullName evidence="1">Alpha-IPM isomerase</fullName>
        <shortName evidence="1">IPMI</shortName>
    </alternativeName>
    <alternativeName>
        <fullName evidence="1">Isopropylmalate isomerase</fullName>
    </alternativeName>
</protein>
<dbReference type="EC" id="4.2.1.33" evidence="1"/>
<dbReference type="EMBL" id="CP001131">
    <property type="protein sequence ID" value="ACG73127.1"/>
    <property type="molecule type" value="Genomic_DNA"/>
</dbReference>
<dbReference type="RefSeq" id="WP_012525941.1">
    <property type="nucleotide sequence ID" value="NC_011145.1"/>
</dbReference>
<dbReference type="SMR" id="B4UAN1"/>
<dbReference type="KEGG" id="ank:AnaeK_1899"/>
<dbReference type="HOGENOM" id="CLU_081378_0_3_7"/>
<dbReference type="OrthoDB" id="9777465at2"/>
<dbReference type="UniPathway" id="UPA00048">
    <property type="reaction ID" value="UER00071"/>
</dbReference>
<dbReference type="Proteomes" id="UP000001871">
    <property type="component" value="Chromosome"/>
</dbReference>
<dbReference type="GO" id="GO:0009316">
    <property type="term" value="C:3-isopropylmalate dehydratase complex"/>
    <property type="evidence" value="ECO:0007669"/>
    <property type="project" value="InterPro"/>
</dbReference>
<dbReference type="GO" id="GO:0003861">
    <property type="term" value="F:3-isopropylmalate dehydratase activity"/>
    <property type="evidence" value="ECO:0007669"/>
    <property type="project" value="UniProtKB-UniRule"/>
</dbReference>
<dbReference type="GO" id="GO:0009098">
    <property type="term" value="P:L-leucine biosynthetic process"/>
    <property type="evidence" value="ECO:0007669"/>
    <property type="project" value="UniProtKB-UniRule"/>
</dbReference>
<dbReference type="CDD" id="cd01577">
    <property type="entry name" value="IPMI_Swivel"/>
    <property type="match status" value="1"/>
</dbReference>
<dbReference type="FunFam" id="3.20.19.10:FF:000003">
    <property type="entry name" value="3-isopropylmalate dehydratase small subunit"/>
    <property type="match status" value="1"/>
</dbReference>
<dbReference type="Gene3D" id="3.20.19.10">
    <property type="entry name" value="Aconitase, domain 4"/>
    <property type="match status" value="1"/>
</dbReference>
<dbReference type="HAMAP" id="MF_01031">
    <property type="entry name" value="LeuD_type1"/>
    <property type="match status" value="1"/>
</dbReference>
<dbReference type="InterPro" id="IPR004431">
    <property type="entry name" value="3-IsopropMal_deHydase_ssu"/>
</dbReference>
<dbReference type="InterPro" id="IPR015928">
    <property type="entry name" value="Aconitase/3IPM_dehydase_swvl"/>
</dbReference>
<dbReference type="InterPro" id="IPR000573">
    <property type="entry name" value="AconitaseA/IPMdHydase_ssu_swvl"/>
</dbReference>
<dbReference type="InterPro" id="IPR033940">
    <property type="entry name" value="IPMI_Swivel"/>
</dbReference>
<dbReference type="InterPro" id="IPR050075">
    <property type="entry name" value="LeuD"/>
</dbReference>
<dbReference type="NCBIfam" id="TIGR00171">
    <property type="entry name" value="leuD"/>
    <property type="match status" value="1"/>
</dbReference>
<dbReference type="NCBIfam" id="NF002458">
    <property type="entry name" value="PRK01641.1"/>
    <property type="match status" value="1"/>
</dbReference>
<dbReference type="PANTHER" id="PTHR43345:SF5">
    <property type="entry name" value="3-ISOPROPYLMALATE DEHYDRATASE SMALL SUBUNIT"/>
    <property type="match status" value="1"/>
</dbReference>
<dbReference type="PANTHER" id="PTHR43345">
    <property type="entry name" value="3-ISOPROPYLMALATE DEHYDRATASE SMALL SUBUNIT 2-RELATED-RELATED"/>
    <property type="match status" value="1"/>
</dbReference>
<dbReference type="Pfam" id="PF00694">
    <property type="entry name" value="Aconitase_C"/>
    <property type="match status" value="1"/>
</dbReference>
<dbReference type="SUPFAM" id="SSF52016">
    <property type="entry name" value="LeuD/IlvD-like"/>
    <property type="match status" value="1"/>
</dbReference>
<gene>
    <name evidence="1" type="primary">leuD</name>
    <name type="ordered locus">AnaeK_1899</name>
</gene>
<name>LEUD_ANASK</name>